<organism>
    <name type="scientific">Ralstonia nicotianae (strain ATCC BAA-1114 / GMI1000)</name>
    <name type="common">Ralstonia solanacearum</name>
    <dbReference type="NCBI Taxonomy" id="267608"/>
    <lineage>
        <taxon>Bacteria</taxon>
        <taxon>Pseudomonadati</taxon>
        <taxon>Pseudomonadota</taxon>
        <taxon>Betaproteobacteria</taxon>
        <taxon>Burkholderiales</taxon>
        <taxon>Burkholderiaceae</taxon>
        <taxon>Ralstonia</taxon>
        <taxon>Ralstonia solanacearum species complex</taxon>
    </lineage>
</organism>
<comment type="function">
    <text evidence="1">Catalyzes the conversion of 4-hydroxy-tetrahydrodipicolinate (HTPA) to tetrahydrodipicolinate.</text>
</comment>
<comment type="catalytic activity">
    <reaction evidence="1">
        <text>(S)-2,3,4,5-tetrahydrodipicolinate + NAD(+) + H2O = (2S,4S)-4-hydroxy-2,3,4,5-tetrahydrodipicolinate + NADH + H(+)</text>
        <dbReference type="Rhea" id="RHEA:35323"/>
        <dbReference type="ChEBI" id="CHEBI:15377"/>
        <dbReference type="ChEBI" id="CHEBI:15378"/>
        <dbReference type="ChEBI" id="CHEBI:16845"/>
        <dbReference type="ChEBI" id="CHEBI:57540"/>
        <dbReference type="ChEBI" id="CHEBI:57945"/>
        <dbReference type="ChEBI" id="CHEBI:67139"/>
        <dbReference type="EC" id="1.17.1.8"/>
    </reaction>
</comment>
<comment type="catalytic activity">
    <reaction evidence="1">
        <text>(S)-2,3,4,5-tetrahydrodipicolinate + NADP(+) + H2O = (2S,4S)-4-hydroxy-2,3,4,5-tetrahydrodipicolinate + NADPH + H(+)</text>
        <dbReference type="Rhea" id="RHEA:35331"/>
        <dbReference type="ChEBI" id="CHEBI:15377"/>
        <dbReference type="ChEBI" id="CHEBI:15378"/>
        <dbReference type="ChEBI" id="CHEBI:16845"/>
        <dbReference type="ChEBI" id="CHEBI:57783"/>
        <dbReference type="ChEBI" id="CHEBI:58349"/>
        <dbReference type="ChEBI" id="CHEBI:67139"/>
        <dbReference type="EC" id="1.17.1.8"/>
    </reaction>
</comment>
<comment type="pathway">
    <text evidence="1">Amino-acid biosynthesis; L-lysine biosynthesis via DAP pathway; (S)-tetrahydrodipicolinate from L-aspartate: step 4/4.</text>
</comment>
<comment type="subcellular location">
    <subcellularLocation>
        <location evidence="1">Cytoplasm</location>
    </subcellularLocation>
</comment>
<comment type="similarity">
    <text evidence="1">Belongs to the DapB family.</text>
</comment>
<comment type="caution">
    <text evidence="2">Was originally thought to be a dihydrodipicolinate reductase (DHDPR), catalyzing the conversion of dihydrodipicolinate to tetrahydrodipicolinate. However, it was shown in E.coli that the substrate of the enzymatic reaction is not dihydrodipicolinate (DHDP) but in fact (2S,4S)-4-hydroxy-2,3,4,5-tetrahydrodipicolinic acid (HTPA), the product released by the DapA-catalyzed reaction.</text>
</comment>
<evidence type="ECO:0000255" key="1">
    <source>
        <dbReference type="HAMAP-Rule" id="MF_00102"/>
    </source>
</evidence>
<evidence type="ECO:0000305" key="2"/>
<name>DAPB_RALN1</name>
<feature type="chain" id="PRO_0000141473" description="4-hydroxy-tetrahydrodipicolinate reductase">
    <location>
        <begin position="1"/>
        <end position="263"/>
    </location>
</feature>
<feature type="active site" description="Proton donor/acceptor" evidence="1">
    <location>
        <position position="153"/>
    </location>
</feature>
<feature type="active site" description="Proton donor" evidence="1">
    <location>
        <position position="157"/>
    </location>
</feature>
<feature type="binding site" evidence="1">
    <location>
        <begin position="7"/>
        <end position="12"/>
    </location>
    <ligand>
        <name>NAD(+)</name>
        <dbReference type="ChEBI" id="CHEBI:57540"/>
    </ligand>
</feature>
<feature type="binding site" evidence="1">
    <location>
        <position position="33"/>
    </location>
    <ligand>
        <name>NAD(+)</name>
        <dbReference type="ChEBI" id="CHEBI:57540"/>
    </ligand>
</feature>
<feature type="binding site" evidence="1">
    <location>
        <position position="34"/>
    </location>
    <ligand>
        <name>NADP(+)</name>
        <dbReference type="ChEBI" id="CHEBI:58349"/>
    </ligand>
</feature>
<feature type="binding site" evidence="1">
    <location>
        <begin position="96"/>
        <end position="98"/>
    </location>
    <ligand>
        <name>NAD(+)</name>
        <dbReference type="ChEBI" id="CHEBI:57540"/>
    </ligand>
</feature>
<feature type="binding site" evidence="1">
    <location>
        <begin position="120"/>
        <end position="123"/>
    </location>
    <ligand>
        <name>NAD(+)</name>
        <dbReference type="ChEBI" id="CHEBI:57540"/>
    </ligand>
</feature>
<feature type="binding site" evidence="1">
    <location>
        <position position="154"/>
    </location>
    <ligand>
        <name>(S)-2,3,4,5-tetrahydrodipicolinate</name>
        <dbReference type="ChEBI" id="CHEBI:16845"/>
    </ligand>
</feature>
<feature type="binding site" evidence="1">
    <location>
        <begin position="163"/>
        <end position="164"/>
    </location>
    <ligand>
        <name>(S)-2,3,4,5-tetrahydrodipicolinate</name>
        <dbReference type="ChEBI" id="CHEBI:16845"/>
    </ligand>
</feature>
<dbReference type="EC" id="1.17.1.8" evidence="1"/>
<dbReference type="EMBL" id="AL646052">
    <property type="protein sequence ID" value="CAD16452.1"/>
    <property type="molecule type" value="Genomic_DNA"/>
</dbReference>
<dbReference type="RefSeq" id="WP_011002652.1">
    <property type="nucleotide sequence ID" value="NC_003295.1"/>
</dbReference>
<dbReference type="SMR" id="Q8XVT2"/>
<dbReference type="STRING" id="267608.RSc2745"/>
<dbReference type="EnsemblBacteria" id="CAD16452">
    <property type="protein sequence ID" value="CAD16452"/>
    <property type="gene ID" value="RSc2745"/>
</dbReference>
<dbReference type="KEGG" id="rso:RSc2745"/>
<dbReference type="PATRIC" id="fig|267608.8.peg.2792"/>
<dbReference type="eggNOG" id="COG0289">
    <property type="taxonomic scope" value="Bacteria"/>
</dbReference>
<dbReference type="HOGENOM" id="CLU_047479_2_1_4"/>
<dbReference type="UniPathway" id="UPA00034">
    <property type="reaction ID" value="UER00018"/>
</dbReference>
<dbReference type="Proteomes" id="UP000001436">
    <property type="component" value="Chromosome"/>
</dbReference>
<dbReference type="GO" id="GO:0005829">
    <property type="term" value="C:cytosol"/>
    <property type="evidence" value="ECO:0007669"/>
    <property type="project" value="TreeGrafter"/>
</dbReference>
<dbReference type="GO" id="GO:0008839">
    <property type="term" value="F:4-hydroxy-tetrahydrodipicolinate reductase"/>
    <property type="evidence" value="ECO:0007669"/>
    <property type="project" value="UniProtKB-EC"/>
</dbReference>
<dbReference type="GO" id="GO:0051287">
    <property type="term" value="F:NAD binding"/>
    <property type="evidence" value="ECO:0007669"/>
    <property type="project" value="UniProtKB-UniRule"/>
</dbReference>
<dbReference type="GO" id="GO:0050661">
    <property type="term" value="F:NADP binding"/>
    <property type="evidence" value="ECO:0007669"/>
    <property type="project" value="UniProtKB-UniRule"/>
</dbReference>
<dbReference type="GO" id="GO:0016726">
    <property type="term" value="F:oxidoreductase activity, acting on CH or CH2 groups, NAD or NADP as acceptor"/>
    <property type="evidence" value="ECO:0007669"/>
    <property type="project" value="UniProtKB-UniRule"/>
</dbReference>
<dbReference type="GO" id="GO:0019877">
    <property type="term" value="P:diaminopimelate biosynthetic process"/>
    <property type="evidence" value="ECO:0007669"/>
    <property type="project" value="UniProtKB-UniRule"/>
</dbReference>
<dbReference type="GO" id="GO:0009089">
    <property type="term" value="P:lysine biosynthetic process via diaminopimelate"/>
    <property type="evidence" value="ECO:0007669"/>
    <property type="project" value="UniProtKB-UniRule"/>
</dbReference>
<dbReference type="CDD" id="cd02274">
    <property type="entry name" value="DHDPR_N"/>
    <property type="match status" value="1"/>
</dbReference>
<dbReference type="FunFam" id="3.30.360.10:FF:000004">
    <property type="entry name" value="4-hydroxy-tetrahydrodipicolinate reductase"/>
    <property type="match status" value="1"/>
</dbReference>
<dbReference type="FunFam" id="3.40.50.720:FF:000048">
    <property type="entry name" value="4-hydroxy-tetrahydrodipicolinate reductase"/>
    <property type="match status" value="1"/>
</dbReference>
<dbReference type="Gene3D" id="3.30.360.10">
    <property type="entry name" value="Dihydrodipicolinate Reductase, domain 2"/>
    <property type="match status" value="1"/>
</dbReference>
<dbReference type="Gene3D" id="3.40.50.720">
    <property type="entry name" value="NAD(P)-binding Rossmann-like Domain"/>
    <property type="match status" value="1"/>
</dbReference>
<dbReference type="HAMAP" id="MF_00102">
    <property type="entry name" value="DapB"/>
    <property type="match status" value="1"/>
</dbReference>
<dbReference type="InterPro" id="IPR022663">
    <property type="entry name" value="DapB_C"/>
</dbReference>
<dbReference type="InterPro" id="IPR000846">
    <property type="entry name" value="DapB_N"/>
</dbReference>
<dbReference type="InterPro" id="IPR022664">
    <property type="entry name" value="DapB_N_CS"/>
</dbReference>
<dbReference type="InterPro" id="IPR023940">
    <property type="entry name" value="DHDPR_bac"/>
</dbReference>
<dbReference type="InterPro" id="IPR036291">
    <property type="entry name" value="NAD(P)-bd_dom_sf"/>
</dbReference>
<dbReference type="NCBIfam" id="TIGR00036">
    <property type="entry name" value="dapB"/>
    <property type="match status" value="1"/>
</dbReference>
<dbReference type="PANTHER" id="PTHR20836:SF0">
    <property type="entry name" value="4-HYDROXY-TETRAHYDRODIPICOLINATE REDUCTASE 1, CHLOROPLASTIC-RELATED"/>
    <property type="match status" value="1"/>
</dbReference>
<dbReference type="PANTHER" id="PTHR20836">
    <property type="entry name" value="DIHYDRODIPICOLINATE REDUCTASE"/>
    <property type="match status" value="1"/>
</dbReference>
<dbReference type="Pfam" id="PF05173">
    <property type="entry name" value="DapB_C"/>
    <property type="match status" value="1"/>
</dbReference>
<dbReference type="Pfam" id="PF01113">
    <property type="entry name" value="DapB_N"/>
    <property type="match status" value="1"/>
</dbReference>
<dbReference type="PIRSF" id="PIRSF000161">
    <property type="entry name" value="DHPR"/>
    <property type="match status" value="1"/>
</dbReference>
<dbReference type="SUPFAM" id="SSF55347">
    <property type="entry name" value="Glyceraldehyde-3-phosphate dehydrogenase-like, C-terminal domain"/>
    <property type="match status" value="1"/>
</dbReference>
<dbReference type="SUPFAM" id="SSF51735">
    <property type="entry name" value="NAD(P)-binding Rossmann-fold domains"/>
    <property type="match status" value="1"/>
</dbReference>
<dbReference type="PROSITE" id="PS01298">
    <property type="entry name" value="DAPB"/>
    <property type="match status" value="1"/>
</dbReference>
<reference key="1">
    <citation type="journal article" date="2002" name="Nature">
        <title>Genome sequence of the plant pathogen Ralstonia solanacearum.</title>
        <authorList>
            <person name="Salanoubat M."/>
            <person name="Genin S."/>
            <person name="Artiguenave F."/>
            <person name="Gouzy J."/>
            <person name="Mangenot S."/>
            <person name="Arlat M."/>
            <person name="Billault A."/>
            <person name="Brottier P."/>
            <person name="Camus J.-C."/>
            <person name="Cattolico L."/>
            <person name="Chandler M."/>
            <person name="Choisne N."/>
            <person name="Claudel-Renard C."/>
            <person name="Cunnac S."/>
            <person name="Demange N."/>
            <person name="Gaspin C."/>
            <person name="Lavie M."/>
            <person name="Moisan A."/>
            <person name="Robert C."/>
            <person name="Saurin W."/>
            <person name="Schiex T."/>
            <person name="Siguier P."/>
            <person name="Thebault P."/>
            <person name="Whalen M."/>
            <person name="Wincker P."/>
            <person name="Levy M."/>
            <person name="Weissenbach J."/>
            <person name="Boucher C.A."/>
        </authorList>
    </citation>
    <scope>NUCLEOTIDE SEQUENCE [LARGE SCALE GENOMIC DNA]</scope>
    <source>
        <strain>ATCC BAA-1114 / GMI1000</strain>
    </source>
</reference>
<protein>
    <recommendedName>
        <fullName evidence="1">4-hydroxy-tetrahydrodipicolinate reductase</fullName>
        <shortName evidence="1">HTPA reductase</shortName>
        <ecNumber evidence="1">1.17.1.8</ecNumber>
    </recommendedName>
</protein>
<sequence length="263" mass="27419">MKIAIAGASGRMGQMLIDTVLRTPGVTLAAALDRAGSDAVGQDAGARLGKATGVIVTDDLRTGLSQADVLIDFTRPEATLAHLEIARELGVGVVIGTTGFTAEQKASFKDYGATIGVVWAPNMSVGVNATFKLIEVAAKILAQGYDVEIVEAHHKHKIDAPSGTALKMGEIVAEAQGTTLAERAVYAREGETGPRMNGTIGFATVRGGDIVGDHTVLFVGEGERIEITHRSNSRQSYAEGAVRAACFLAGKKGLFDMNDVLGL</sequence>
<proteinExistence type="inferred from homology"/>
<keyword id="KW-0028">Amino-acid biosynthesis</keyword>
<keyword id="KW-0963">Cytoplasm</keyword>
<keyword id="KW-0220">Diaminopimelate biosynthesis</keyword>
<keyword id="KW-0457">Lysine biosynthesis</keyword>
<keyword id="KW-0520">NAD</keyword>
<keyword id="KW-0521">NADP</keyword>
<keyword id="KW-0560">Oxidoreductase</keyword>
<keyword id="KW-1185">Reference proteome</keyword>
<accession>Q8XVT2</accession>
<gene>
    <name evidence="1" type="primary">dapB</name>
    <name type="ordered locus">RSc2745</name>
    <name type="ORF">RS00109</name>
</gene>